<proteinExistence type="inferred from homology"/>
<feature type="chain" id="PRO_0000167866" description="Protein FixB">
    <location>
        <begin position="1"/>
        <end position="313"/>
    </location>
</feature>
<feature type="binding site" evidence="1">
    <location>
        <begin position="255"/>
        <end position="283"/>
    </location>
    <ligand>
        <name>FAD</name>
        <dbReference type="ChEBI" id="CHEBI:57692"/>
    </ligand>
</feature>
<name>FIXB_SALTY</name>
<gene>
    <name evidence="1" type="primary">fixB</name>
    <name type="ordered locus">STM0076</name>
</gene>
<dbReference type="EMBL" id="AE006468">
    <property type="protein sequence ID" value="AAL19040.1"/>
    <property type="molecule type" value="Genomic_DNA"/>
</dbReference>
<dbReference type="RefSeq" id="NP_459081.1">
    <property type="nucleotide sequence ID" value="NC_003197.2"/>
</dbReference>
<dbReference type="RefSeq" id="WP_001032189.1">
    <property type="nucleotide sequence ID" value="NC_003197.2"/>
</dbReference>
<dbReference type="SMR" id="P64095"/>
<dbReference type="STRING" id="99287.STM0076"/>
<dbReference type="PaxDb" id="99287-STM0076"/>
<dbReference type="GeneID" id="1251594"/>
<dbReference type="KEGG" id="stm:STM0076"/>
<dbReference type="PATRIC" id="fig|99287.12.peg.79"/>
<dbReference type="HOGENOM" id="CLU_034178_0_1_6"/>
<dbReference type="OMA" id="RYVFGNK"/>
<dbReference type="PhylomeDB" id="P64095"/>
<dbReference type="BioCyc" id="SENT99287:STM0076-MONOMER"/>
<dbReference type="UniPathway" id="UPA00117"/>
<dbReference type="Proteomes" id="UP000001014">
    <property type="component" value="Chromosome"/>
</dbReference>
<dbReference type="GO" id="GO:0009055">
    <property type="term" value="F:electron transfer activity"/>
    <property type="evidence" value="ECO:0000318"/>
    <property type="project" value="GO_Central"/>
</dbReference>
<dbReference type="GO" id="GO:0050660">
    <property type="term" value="F:flavin adenine dinucleotide binding"/>
    <property type="evidence" value="ECO:0000318"/>
    <property type="project" value="GO_Central"/>
</dbReference>
<dbReference type="GO" id="GO:0009437">
    <property type="term" value="P:carnitine metabolic process"/>
    <property type="evidence" value="ECO:0007669"/>
    <property type="project" value="UniProtKB-UniRule"/>
</dbReference>
<dbReference type="GO" id="GO:0033539">
    <property type="term" value="P:fatty acid beta-oxidation using acyl-CoA dehydrogenase"/>
    <property type="evidence" value="ECO:0000318"/>
    <property type="project" value="GO_Central"/>
</dbReference>
<dbReference type="FunFam" id="3.40.50.1220:FF:000004">
    <property type="entry name" value="Electron transfer flavoprotein"/>
    <property type="match status" value="1"/>
</dbReference>
<dbReference type="FunFam" id="3.40.50.620:FF:000067">
    <property type="entry name" value="Protein FixB"/>
    <property type="match status" value="1"/>
</dbReference>
<dbReference type="Gene3D" id="3.40.50.620">
    <property type="entry name" value="HUPs"/>
    <property type="match status" value="1"/>
</dbReference>
<dbReference type="Gene3D" id="3.40.50.1220">
    <property type="entry name" value="TPP-binding domain"/>
    <property type="match status" value="1"/>
</dbReference>
<dbReference type="HAMAP" id="MF_01056">
    <property type="entry name" value="FixB"/>
    <property type="match status" value="1"/>
</dbReference>
<dbReference type="InterPro" id="IPR029035">
    <property type="entry name" value="DHS-like_NAD/FAD-binding_dom"/>
</dbReference>
<dbReference type="InterPro" id="IPR014730">
    <property type="entry name" value="ETF_a/b_N"/>
</dbReference>
<dbReference type="InterPro" id="IPR001308">
    <property type="entry name" value="ETF_a/FixB"/>
</dbReference>
<dbReference type="InterPro" id="IPR014731">
    <property type="entry name" value="ETF_asu_C"/>
</dbReference>
<dbReference type="InterPro" id="IPR018206">
    <property type="entry name" value="ETF_asu_C_CS"/>
</dbReference>
<dbReference type="InterPro" id="IPR023461">
    <property type="entry name" value="FixB"/>
</dbReference>
<dbReference type="InterPro" id="IPR014729">
    <property type="entry name" value="Rossmann-like_a/b/a_fold"/>
</dbReference>
<dbReference type="NCBIfam" id="NF002889">
    <property type="entry name" value="PRK03363.1"/>
    <property type="match status" value="1"/>
</dbReference>
<dbReference type="PANTHER" id="PTHR43153">
    <property type="entry name" value="ELECTRON TRANSFER FLAVOPROTEIN ALPHA"/>
    <property type="match status" value="1"/>
</dbReference>
<dbReference type="PANTHER" id="PTHR43153:SF5">
    <property type="entry name" value="PROTEIN FIXB-RELATED"/>
    <property type="match status" value="1"/>
</dbReference>
<dbReference type="Pfam" id="PF01012">
    <property type="entry name" value="ETF"/>
    <property type="match status" value="1"/>
</dbReference>
<dbReference type="Pfam" id="PF00766">
    <property type="entry name" value="ETF_alpha"/>
    <property type="match status" value="1"/>
</dbReference>
<dbReference type="PIRSF" id="PIRSF000089">
    <property type="entry name" value="Electra_flavoP_a"/>
    <property type="match status" value="1"/>
</dbReference>
<dbReference type="SMART" id="SM00893">
    <property type="entry name" value="ETF"/>
    <property type="match status" value="1"/>
</dbReference>
<dbReference type="SUPFAM" id="SSF52402">
    <property type="entry name" value="Adenine nucleotide alpha hydrolases-like"/>
    <property type="match status" value="1"/>
</dbReference>
<dbReference type="SUPFAM" id="SSF52467">
    <property type="entry name" value="DHS-like NAD/FAD-binding domain"/>
    <property type="match status" value="1"/>
</dbReference>
<dbReference type="PROSITE" id="PS00696">
    <property type="entry name" value="ETF_ALPHA"/>
    <property type="match status" value="1"/>
</dbReference>
<protein>
    <recommendedName>
        <fullName evidence="1">Protein FixB</fullName>
    </recommendedName>
</protein>
<organism>
    <name type="scientific">Salmonella typhimurium (strain LT2 / SGSC1412 / ATCC 700720)</name>
    <dbReference type="NCBI Taxonomy" id="99287"/>
    <lineage>
        <taxon>Bacteria</taxon>
        <taxon>Pseudomonadati</taxon>
        <taxon>Pseudomonadota</taxon>
        <taxon>Gammaproteobacteria</taxon>
        <taxon>Enterobacterales</taxon>
        <taxon>Enterobacteriaceae</taxon>
        <taxon>Salmonella</taxon>
    </lineage>
</organism>
<sequence length="313" mass="33223">MNKFSSVWVFSDTPSRLPELMSGAQAVGEKVNAFVLNEADSATACHLGADHVWLLSGKPEDRMIEDYAAAMAETIRQHSEGGAVLLPNTRRGKLLAAKLGYRLSAAVSNDASDVSLQDGKAAVKHMVYGGLAIGAETIASPFAVITLSSGTFDAQQPDASRSGEMHTVQWQAPATAVTRTATQARQSNSVDLDKARLVVSVGRGIGSKENISLAEALCQTIGAELACSRPVAENEKWMEHERYVGISNLMLKPELYLAVGISGQIQHMVGANGAQTIFAINKDKNAPIFQYADFGIVGDALKILPALTAALAR</sequence>
<keyword id="KW-0249">Electron transport</keyword>
<keyword id="KW-0274">FAD</keyword>
<keyword id="KW-0285">Flavoprotein</keyword>
<keyword id="KW-1185">Reference proteome</keyword>
<keyword id="KW-0813">Transport</keyword>
<reference key="1">
    <citation type="journal article" date="2001" name="Nature">
        <title>Complete genome sequence of Salmonella enterica serovar Typhimurium LT2.</title>
        <authorList>
            <person name="McClelland M."/>
            <person name="Sanderson K.E."/>
            <person name="Spieth J."/>
            <person name="Clifton S.W."/>
            <person name="Latreille P."/>
            <person name="Courtney L."/>
            <person name="Porwollik S."/>
            <person name="Ali J."/>
            <person name="Dante M."/>
            <person name="Du F."/>
            <person name="Hou S."/>
            <person name="Layman D."/>
            <person name="Leonard S."/>
            <person name="Nguyen C."/>
            <person name="Scott K."/>
            <person name="Holmes A."/>
            <person name="Grewal N."/>
            <person name="Mulvaney E."/>
            <person name="Ryan E."/>
            <person name="Sun H."/>
            <person name="Florea L."/>
            <person name="Miller W."/>
            <person name="Stoneking T."/>
            <person name="Nhan M."/>
            <person name="Waterston R."/>
            <person name="Wilson R.K."/>
        </authorList>
    </citation>
    <scope>NUCLEOTIDE SEQUENCE [LARGE SCALE GENOMIC DNA]</scope>
    <source>
        <strain>LT2 / SGSC1412 / ATCC 700720</strain>
    </source>
</reference>
<comment type="function">
    <text evidence="1">Required for anaerobic carnitine reduction. May bring reductant to CaiA.</text>
</comment>
<comment type="pathway">
    <text evidence="1">Amine and polyamine metabolism; carnitine metabolism.</text>
</comment>
<comment type="subunit">
    <text evidence="1">Heterodimer of FixA and FixB.</text>
</comment>
<comment type="similarity">
    <text evidence="1">Belongs to the ETF alpha-subunit/FixB family.</text>
</comment>
<accession>P64095</accession>
<accession>Q8XH05</accession>
<evidence type="ECO:0000255" key="1">
    <source>
        <dbReference type="HAMAP-Rule" id="MF_01056"/>
    </source>
</evidence>